<comment type="function">
    <text evidence="1">Essential for recycling GMP and indirectly, cGMP.</text>
</comment>
<comment type="catalytic activity">
    <reaction evidence="1">
        <text>GMP + ATP = GDP + ADP</text>
        <dbReference type="Rhea" id="RHEA:20780"/>
        <dbReference type="ChEBI" id="CHEBI:30616"/>
        <dbReference type="ChEBI" id="CHEBI:58115"/>
        <dbReference type="ChEBI" id="CHEBI:58189"/>
        <dbReference type="ChEBI" id="CHEBI:456216"/>
        <dbReference type="EC" id="2.7.4.8"/>
    </reaction>
</comment>
<comment type="subcellular location">
    <subcellularLocation>
        <location evidence="1">Cytoplasm</location>
    </subcellularLocation>
</comment>
<comment type="similarity">
    <text evidence="1">Belongs to the guanylate kinase family.</text>
</comment>
<gene>
    <name evidence="1" type="primary">gmk</name>
    <name type="ordered locus">TT_C1197</name>
</gene>
<dbReference type="EC" id="2.7.4.8" evidence="1"/>
<dbReference type="EMBL" id="AE017221">
    <property type="protein sequence ID" value="AAS81539.1"/>
    <property type="molecule type" value="Genomic_DNA"/>
</dbReference>
<dbReference type="RefSeq" id="WP_008633187.1">
    <property type="nucleotide sequence ID" value="NC_005835.1"/>
</dbReference>
<dbReference type="SMR" id="Q72ID5"/>
<dbReference type="GeneID" id="3169695"/>
<dbReference type="KEGG" id="tth:TT_C1197"/>
<dbReference type="eggNOG" id="COG0194">
    <property type="taxonomic scope" value="Bacteria"/>
</dbReference>
<dbReference type="HOGENOM" id="CLU_001715_1_2_0"/>
<dbReference type="OrthoDB" id="9808150at2"/>
<dbReference type="Proteomes" id="UP000000592">
    <property type="component" value="Chromosome"/>
</dbReference>
<dbReference type="GO" id="GO:0005829">
    <property type="term" value="C:cytosol"/>
    <property type="evidence" value="ECO:0007669"/>
    <property type="project" value="TreeGrafter"/>
</dbReference>
<dbReference type="GO" id="GO:0005524">
    <property type="term" value="F:ATP binding"/>
    <property type="evidence" value="ECO:0007669"/>
    <property type="project" value="UniProtKB-UniRule"/>
</dbReference>
<dbReference type="GO" id="GO:0004385">
    <property type="term" value="F:guanylate kinase activity"/>
    <property type="evidence" value="ECO:0007669"/>
    <property type="project" value="UniProtKB-UniRule"/>
</dbReference>
<dbReference type="CDD" id="cd00071">
    <property type="entry name" value="GMPK"/>
    <property type="match status" value="1"/>
</dbReference>
<dbReference type="FunFam" id="3.40.50.300:FF:000855">
    <property type="entry name" value="Guanylate kinase"/>
    <property type="match status" value="1"/>
</dbReference>
<dbReference type="FunFam" id="3.30.63.10:FF:000002">
    <property type="entry name" value="Guanylate kinase 1"/>
    <property type="match status" value="1"/>
</dbReference>
<dbReference type="Gene3D" id="3.30.63.10">
    <property type="entry name" value="Guanylate Kinase phosphate binding domain"/>
    <property type="match status" value="1"/>
</dbReference>
<dbReference type="Gene3D" id="3.40.50.300">
    <property type="entry name" value="P-loop containing nucleotide triphosphate hydrolases"/>
    <property type="match status" value="1"/>
</dbReference>
<dbReference type="HAMAP" id="MF_00328">
    <property type="entry name" value="Guanylate_kinase"/>
    <property type="match status" value="1"/>
</dbReference>
<dbReference type="InterPro" id="IPR008145">
    <property type="entry name" value="GK/Ca_channel_bsu"/>
</dbReference>
<dbReference type="InterPro" id="IPR008144">
    <property type="entry name" value="Guanylate_kin-like_dom"/>
</dbReference>
<dbReference type="InterPro" id="IPR017665">
    <property type="entry name" value="Guanylate_kinase"/>
</dbReference>
<dbReference type="InterPro" id="IPR020590">
    <property type="entry name" value="Guanylate_kinase_CS"/>
</dbReference>
<dbReference type="InterPro" id="IPR027417">
    <property type="entry name" value="P-loop_NTPase"/>
</dbReference>
<dbReference type="NCBIfam" id="TIGR03263">
    <property type="entry name" value="guanyl_kin"/>
    <property type="match status" value="1"/>
</dbReference>
<dbReference type="PANTHER" id="PTHR23117:SF13">
    <property type="entry name" value="GUANYLATE KINASE"/>
    <property type="match status" value="1"/>
</dbReference>
<dbReference type="PANTHER" id="PTHR23117">
    <property type="entry name" value="GUANYLATE KINASE-RELATED"/>
    <property type="match status" value="1"/>
</dbReference>
<dbReference type="Pfam" id="PF00625">
    <property type="entry name" value="Guanylate_kin"/>
    <property type="match status" value="1"/>
</dbReference>
<dbReference type="SMART" id="SM00072">
    <property type="entry name" value="GuKc"/>
    <property type="match status" value="1"/>
</dbReference>
<dbReference type="SUPFAM" id="SSF52540">
    <property type="entry name" value="P-loop containing nucleoside triphosphate hydrolases"/>
    <property type="match status" value="1"/>
</dbReference>
<dbReference type="PROSITE" id="PS00856">
    <property type="entry name" value="GUANYLATE_KINASE_1"/>
    <property type="match status" value="1"/>
</dbReference>
<dbReference type="PROSITE" id="PS50052">
    <property type="entry name" value="GUANYLATE_KINASE_2"/>
    <property type="match status" value="1"/>
</dbReference>
<proteinExistence type="inferred from homology"/>
<sequence>MRGRLFVMTGASGVGKGTVRAKVLERTRLFYSISMTTRPPRPGEVDGVDYYFVDRPTFEALVREDGFLEYAEYVGHLYGTPRAPVERALSRGEDVLLEIEVQGALQVKRAVPEAVLIFLLPPSLSELKRRLVYRGKDSPEKIQKRLEQAEWEIRNAHLFDYVVVNDVLEEAVADFLAILTAERRRSGRMGEALEMALRRDLALEAELDEILRRRYGGTGH</sequence>
<reference key="1">
    <citation type="journal article" date="2004" name="Nat. Biotechnol.">
        <title>The genome sequence of the extreme thermophile Thermus thermophilus.</title>
        <authorList>
            <person name="Henne A."/>
            <person name="Brueggemann H."/>
            <person name="Raasch C."/>
            <person name="Wiezer A."/>
            <person name="Hartsch T."/>
            <person name="Liesegang H."/>
            <person name="Johann A."/>
            <person name="Lienard T."/>
            <person name="Gohl O."/>
            <person name="Martinez-Arias R."/>
            <person name="Jacobi C."/>
            <person name="Starkuviene V."/>
            <person name="Schlenczeck S."/>
            <person name="Dencker S."/>
            <person name="Huber R."/>
            <person name="Klenk H.-P."/>
            <person name="Kramer W."/>
            <person name="Merkl R."/>
            <person name="Gottschalk G."/>
            <person name="Fritz H.-J."/>
        </authorList>
    </citation>
    <scope>NUCLEOTIDE SEQUENCE [LARGE SCALE GENOMIC DNA]</scope>
    <source>
        <strain>ATCC BAA-163 / DSM 7039 / HB27</strain>
    </source>
</reference>
<organism>
    <name type="scientific">Thermus thermophilus (strain ATCC BAA-163 / DSM 7039 / HB27)</name>
    <dbReference type="NCBI Taxonomy" id="262724"/>
    <lineage>
        <taxon>Bacteria</taxon>
        <taxon>Thermotogati</taxon>
        <taxon>Deinococcota</taxon>
        <taxon>Deinococci</taxon>
        <taxon>Thermales</taxon>
        <taxon>Thermaceae</taxon>
        <taxon>Thermus</taxon>
    </lineage>
</organism>
<name>KGUA_THET2</name>
<accession>Q72ID5</accession>
<keyword id="KW-0067">ATP-binding</keyword>
<keyword id="KW-0963">Cytoplasm</keyword>
<keyword id="KW-0418">Kinase</keyword>
<keyword id="KW-0547">Nucleotide-binding</keyword>
<keyword id="KW-0808">Transferase</keyword>
<evidence type="ECO:0000255" key="1">
    <source>
        <dbReference type="HAMAP-Rule" id="MF_00328"/>
    </source>
</evidence>
<protein>
    <recommendedName>
        <fullName evidence="1">Guanylate kinase</fullName>
        <ecNumber evidence="1">2.7.4.8</ecNumber>
    </recommendedName>
    <alternativeName>
        <fullName evidence="1">GMP kinase</fullName>
    </alternativeName>
</protein>
<feature type="chain" id="PRO_0000170631" description="Guanylate kinase">
    <location>
        <begin position="1"/>
        <end position="220"/>
    </location>
</feature>
<feature type="domain" description="Guanylate kinase-like" evidence="1">
    <location>
        <begin position="3"/>
        <end position="180"/>
    </location>
</feature>
<feature type="binding site" evidence="1">
    <location>
        <begin position="10"/>
        <end position="17"/>
    </location>
    <ligand>
        <name>ATP</name>
        <dbReference type="ChEBI" id="CHEBI:30616"/>
    </ligand>
</feature>